<name>RIMO_JANMA</name>
<proteinExistence type="inferred from homology"/>
<comment type="function">
    <text evidence="1">Catalyzes the methylthiolation of an aspartic acid residue of ribosomal protein uS12.</text>
</comment>
<comment type="catalytic activity">
    <reaction evidence="1">
        <text>L-aspartate(89)-[ribosomal protein uS12]-hydrogen + (sulfur carrier)-SH + AH2 + 2 S-adenosyl-L-methionine = 3-methylsulfanyl-L-aspartate(89)-[ribosomal protein uS12]-hydrogen + (sulfur carrier)-H + 5'-deoxyadenosine + L-methionine + A + S-adenosyl-L-homocysteine + 2 H(+)</text>
        <dbReference type="Rhea" id="RHEA:37087"/>
        <dbReference type="Rhea" id="RHEA-COMP:10460"/>
        <dbReference type="Rhea" id="RHEA-COMP:10461"/>
        <dbReference type="Rhea" id="RHEA-COMP:14737"/>
        <dbReference type="Rhea" id="RHEA-COMP:14739"/>
        <dbReference type="ChEBI" id="CHEBI:13193"/>
        <dbReference type="ChEBI" id="CHEBI:15378"/>
        <dbReference type="ChEBI" id="CHEBI:17319"/>
        <dbReference type="ChEBI" id="CHEBI:17499"/>
        <dbReference type="ChEBI" id="CHEBI:29917"/>
        <dbReference type="ChEBI" id="CHEBI:29961"/>
        <dbReference type="ChEBI" id="CHEBI:57844"/>
        <dbReference type="ChEBI" id="CHEBI:57856"/>
        <dbReference type="ChEBI" id="CHEBI:59789"/>
        <dbReference type="ChEBI" id="CHEBI:64428"/>
        <dbReference type="ChEBI" id="CHEBI:73599"/>
        <dbReference type="EC" id="2.8.4.4"/>
    </reaction>
</comment>
<comment type="cofactor">
    <cofactor evidence="1">
        <name>[4Fe-4S] cluster</name>
        <dbReference type="ChEBI" id="CHEBI:49883"/>
    </cofactor>
    <text evidence="1">Binds 2 [4Fe-4S] clusters. One cluster is coordinated with 3 cysteines and an exchangeable S-adenosyl-L-methionine.</text>
</comment>
<comment type="subcellular location">
    <subcellularLocation>
        <location evidence="1">Cytoplasm</location>
    </subcellularLocation>
</comment>
<comment type="similarity">
    <text evidence="1">Belongs to the methylthiotransferase family. RimO subfamily.</text>
</comment>
<reference key="1">
    <citation type="journal article" date="2007" name="PLoS Genet.">
        <title>Genome analysis of Minibacterium massiliensis highlights the convergent evolution of water-living bacteria.</title>
        <authorList>
            <person name="Audic S."/>
            <person name="Robert C."/>
            <person name="Campagna B."/>
            <person name="Parinello H."/>
            <person name="Claverie J.-M."/>
            <person name="Raoult D."/>
            <person name="Drancourt M."/>
        </authorList>
    </citation>
    <scope>NUCLEOTIDE SEQUENCE [LARGE SCALE GENOMIC DNA]</scope>
    <source>
        <strain>Marseille</strain>
    </source>
</reference>
<keyword id="KW-0004">4Fe-4S</keyword>
<keyword id="KW-0963">Cytoplasm</keyword>
<keyword id="KW-0408">Iron</keyword>
<keyword id="KW-0411">Iron-sulfur</keyword>
<keyword id="KW-0479">Metal-binding</keyword>
<keyword id="KW-0949">S-adenosyl-L-methionine</keyword>
<keyword id="KW-0808">Transferase</keyword>
<evidence type="ECO:0000255" key="1">
    <source>
        <dbReference type="HAMAP-Rule" id="MF_01865"/>
    </source>
</evidence>
<evidence type="ECO:0000255" key="2">
    <source>
        <dbReference type="PROSITE-ProRule" id="PRU01266"/>
    </source>
</evidence>
<organism>
    <name type="scientific">Janthinobacterium sp. (strain Marseille)</name>
    <name type="common">Minibacterium massiliensis</name>
    <dbReference type="NCBI Taxonomy" id="375286"/>
    <lineage>
        <taxon>Bacteria</taxon>
        <taxon>Pseudomonadati</taxon>
        <taxon>Pseudomonadota</taxon>
        <taxon>Betaproteobacteria</taxon>
        <taxon>Burkholderiales</taxon>
        <taxon>Oxalobacteraceae</taxon>
        <taxon>Janthinobacterium</taxon>
    </lineage>
</organism>
<accession>A6SXU1</accession>
<sequence>MTNALQATPKIGFVSLGCPKALVDSEQILTQLRAEGYDTAKSYDGADLVIVNTCGFIDAAVQESLDAIGEALHENGKVIVTGCLGAKKDADGDDIIQKVHPKVLAVTGPHALGEVMDAVHKHMPKPHAPFIDLVPAQGIKLTPKHFAYLKISEGCNHRCSFCIIPSMRGDLVSRPIADVMMEAENLFKAGVKELLVISQDTSAYGVDVKFRMGFWNGKPVKTHMTQLVEALGELAKQYGAWVRLHYVYPYPHVDAIIPMMAEGKILPYLDVPLQHAHPDVLKRMKRPASGEKNIERIQAWRAMCPDLTIRSTFIAGFPGETDAEFEYLLDFLKEAEIDRLGCFAYSPVEGATANDLPNAVPEEVREERRGRVMLLQEEISKKRLQAKVGKTMRVLLDEVNRNGGVARSGADAPEIDGVVYVKPPYEPHLKLKVGEFIDVKITGADAHDLWAEA</sequence>
<gene>
    <name evidence="1" type="primary">rimO</name>
    <name type="ordered locus">mma_1398</name>
</gene>
<protein>
    <recommendedName>
        <fullName evidence="1">Ribosomal protein uS12 methylthiotransferase RimO</fullName>
        <shortName evidence="1">uS12 MTTase</shortName>
        <shortName evidence="1">uS12 methylthiotransferase</shortName>
        <ecNumber evidence="1">2.8.4.4</ecNumber>
    </recommendedName>
    <alternativeName>
        <fullName evidence="1">Ribosomal protein uS12 (aspartate-C(3))-methylthiotransferase</fullName>
    </alternativeName>
    <alternativeName>
        <fullName evidence="1">Ribosome maturation factor RimO</fullName>
    </alternativeName>
</protein>
<dbReference type="EC" id="2.8.4.4" evidence="1"/>
<dbReference type="EMBL" id="CP000269">
    <property type="protein sequence ID" value="ABR89600.1"/>
    <property type="molecule type" value="Genomic_DNA"/>
</dbReference>
<dbReference type="RefSeq" id="WP_012079254.1">
    <property type="nucleotide sequence ID" value="NC_009659.1"/>
</dbReference>
<dbReference type="SMR" id="A6SXU1"/>
<dbReference type="STRING" id="375286.mma_1398"/>
<dbReference type="KEGG" id="mms:mma_1398"/>
<dbReference type="eggNOG" id="COG0621">
    <property type="taxonomic scope" value="Bacteria"/>
</dbReference>
<dbReference type="HOGENOM" id="CLU_018697_0_0_4"/>
<dbReference type="OrthoDB" id="9805215at2"/>
<dbReference type="Proteomes" id="UP000006388">
    <property type="component" value="Chromosome"/>
</dbReference>
<dbReference type="GO" id="GO:0005829">
    <property type="term" value="C:cytosol"/>
    <property type="evidence" value="ECO:0007669"/>
    <property type="project" value="TreeGrafter"/>
</dbReference>
<dbReference type="GO" id="GO:0051539">
    <property type="term" value="F:4 iron, 4 sulfur cluster binding"/>
    <property type="evidence" value="ECO:0007669"/>
    <property type="project" value="UniProtKB-UniRule"/>
</dbReference>
<dbReference type="GO" id="GO:0035599">
    <property type="term" value="F:aspartic acid methylthiotransferase activity"/>
    <property type="evidence" value="ECO:0007669"/>
    <property type="project" value="TreeGrafter"/>
</dbReference>
<dbReference type="GO" id="GO:0046872">
    <property type="term" value="F:metal ion binding"/>
    <property type="evidence" value="ECO:0007669"/>
    <property type="project" value="UniProtKB-KW"/>
</dbReference>
<dbReference type="GO" id="GO:0103039">
    <property type="term" value="F:protein methylthiotransferase activity"/>
    <property type="evidence" value="ECO:0007669"/>
    <property type="project" value="UniProtKB-EC"/>
</dbReference>
<dbReference type="GO" id="GO:0006400">
    <property type="term" value="P:tRNA modification"/>
    <property type="evidence" value="ECO:0007669"/>
    <property type="project" value="InterPro"/>
</dbReference>
<dbReference type="CDD" id="cd01335">
    <property type="entry name" value="Radical_SAM"/>
    <property type="match status" value="1"/>
</dbReference>
<dbReference type="FunFam" id="3.40.50.12160:FF:000002">
    <property type="entry name" value="Ribosomal protein S12 methylthiotransferase RimO"/>
    <property type="match status" value="1"/>
</dbReference>
<dbReference type="FunFam" id="3.80.30.20:FF:000001">
    <property type="entry name" value="tRNA-2-methylthio-N(6)-dimethylallyladenosine synthase 2"/>
    <property type="match status" value="1"/>
</dbReference>
<dbReference type="Gene3D" id="3.40.50.12160">
    <property type="entry name" value="Methylthiotransferase, N-terminal domain"/>
    <property type="match status" value="1"/>
</dbReference>
<dbReference type="Gene3D" id="2.40.50.140">
    <property type="entry name" value="Nucleic acid-binding proteins"/>
    <property type="match status" value="1"/>
</dbReference>
<dbReference type="Gene3D" id="3.80.30.20">
    <property type="entry name" value="tm_1862 like domain"/>
    <property type="match status" value="1"/>
</dbReference>
<dbReference type="HAMAP" id="MF_01865">
    <property type="entry name" value="MTTase_RimO"/>
    <property type="match status" value="1"/>
</dbReference>
<dbReference type="InterPro" id="IPR006638">
    <property type="entry name" value="Elp3/MiaA/NifB-like_rSAM"/>
</dbReference>
<dbReference type="InterPro" id="IPR005839">
    <property type="entry name" value="Methylthiotransferase"/>
</dbReference>
<dbReference type="InterPro" id="IPR020612">
    <property type="entry name" value="Methylthiotransferase_CS"/>
</dbReference>
<dbReference type="InterPro" id="IPR013848">
    <property type="entry name" value="Methylthiotransferase_N"/>
</dbReference>
<dbReference type="InterPro" id="IPR038135">
    <property type="entry name" value="Methylthiotransferase_N_sf"/>
</dbReference>
<dbReference type="InterPro" id="IPR012340">
    <property type="entry name" value="NA-bd_OB-fold"/>
</dbReference>
<dbReference type="InterPro" id="IPR005840">
    <property type="entry name" value="Ribosomal_uS12_MeSTrfase_RimO"/>
</dbReference>
<dbReference type="InterPro" id="IPR007197">
    <property type="entry name" value="rSAM"/>
</dbReference>
<dbReference type="InterPro" id="IPR023404">
    <property type="entry name" value="rSAM_horseshoe"/>
</dbReference>
<dbReference type="InterPro" id="IPR002792">
    <property type="entry name" value="TRAM_dom"/>
</dbReference>
<dbReference type="NCBIfam" id="TIGR01125">
    <property type="entry name" value="30S ribosomal protein S12 methylthiotransferase RimO"/>
    <property type="match status" value="1"/>
</dbReference>
<dbReference type="NCBIfam" id="TIGR00089">
    <property type="entry name" value="MiaB/RimO family radical SAM methylthiotransferase"/>
    <property type="match status" value="1"/>
</dbReference>
<dbReference type="PANTHER" id="PTHR43837">
    <property type="entry name" value="RIBOSOMAL PROTEIN S12 METHYLTHIOTRANSFERASE RIMO"/>
    <property type="match status" value="1"/>
</dbReference>
<dbReference type="PANTHER" id="PTHR43837:SF1">
    <property type="entry name" value="RIBOSOMAL PROTEIN US12 METHYLTHIOTRANSFERASE RIMO"/>
    <property type="match status" value="1"/>
</dbReference>
<dbReference type="Pfam" id="PF04055">
    <property type="entry name" value="Radical_SAM"/>
    <property type="match status" value="1"/>
</dbReference>
<dbReference type="Pfam" id="PF18693">
    <property type="entry name" value="TRAM_2"/>
    <property type="match status" value="1"/>
</dbReference>
<dbReference type="Pfam" id="PF00919">
    <property type="entry name" value="UPF0004"/>
    <property type="match status" value="1"/>
</dbReference>
<dbReference type="SFLD" id="SFLDG01082">
    <property type="entry name" value="B12-binding_domain_containing"/>
    <property type="match status" value="1"/>
</dbReference>
<dbReference type="SFLD" id="SFLDG01061">
    <property type="entry name" value="methylthiotransferase"/>
    <property type="match status" value="1"/>
</dbReference>
<dbReference type="SFLD" id="SFLDF00274">
    <property type="entry name" value="ribosomal_protein_S12_methylth"/>
    <property type="match status" value="1"/>
</dbReference>
<dbReference type="SMART" id="SM00729">
    <property type="entry name" value="Elp3"/>
    <property type="match status" value="1"/>
</dbReference>
<dbReference type="SUPFAM" id="SSF102114">
    <property type="entry name" value="Radical SAM enzymes"/>
    <property type="match status" value="1"/>
</dbReference>
<dbReference type="PROSITE" id="PS51449">
    <property type="entry name" value="MTTASE_N"/>
    <property type="match status" value="1"/>
</dbReference>
<dbReference type="PROSITE" id="PS01278">
    <property type="entry name" value="MTTASE_RADICAL"/>
    <property type="match status" value="1"/>
</dbReference>
<dbReference type="PROSITE" id="PS51918">
    <property type="entry name" value="RADICAL_SAM"/>
    <property type="match status" value="1"/>
</dbReference>
<dbReference type="PROSITE" id="PS50926">
    <property type="entry name" value="TRAM"/>
    <property type="match status" value="1"/>
</dbReference>
<feature type="chain" id="PRO_0000374868" description="Ribosomal protein uS12 methylthiotransferase RimO">
    <location>
        <begin position="1"/>
        <end position="453"/>
    </location>
</feature>
<feature type="domain" description="MTTase N-terminal" evidence="1">
    <location>
        <begin position="9"/>
        <end position="124"/>
    </location>
</feature>
<feature type="domain" description="Radical SAM core" evidence="2">
    <location>
        <begin position="141"/>
        <end position="382"/>
    </location>
</feature>
<feature type="domain" description="TRAM" evidence="1">
    <location>
        <begin position="385"/>
        <end position="453"/>
    </location>
</feature>
<feature type="binding site" evidence="1">
    <location>
        <position position="18"/>
    </location>
    <ligand>
        <name>[4Fe-4S] cluster</name>
        <dbReference type="ChEBI" id="CHEBI:49883"/>
        <label>1</label>
    </ligand>
</feature>
<feature type="binding site" evidence="1">
    <location>
        <position position="54"/>
    </location>
    <ligand>
        <name>[4Fe-4S] cluster</name>
        <dbReference type="ChEBI" id="CHEBI:49883"/>
        <label>1</label>
    </ligand>
</feature>
<feature type="binding site" evidence="1">
    <location>
        <position position="83"/>
    </location>
    <ligand>
        <name>[4Fe-4S] cluster</name>
        <dbReference type="ChEBI" id="CHEBI:49883"/>
        <label>1</label>
    </ligand>
</feature>
<feature type="binding site" evidence="1">
    <location>
        <position position="155"/>
    </location>
    <ligand>
        <name>[4Fe-4S] cluster</name>
        <dbReference type="ChEBI" id="CHEBI:49883"/>
        <label>2</label>
        <note>4Fe-4S-S-AdoMet</note>
    </ligand>
</feature>
<feature type="binding site" evidence="1">
    <location>
        <position position="159"/>
    </location>
    <ligand>
        <name>[4Fe-4S] cluster</name>
        <dbReference type="ChEBI" id="CHEBI:49883"/>
        <label>2</label>
        <note>4Fe-4S-S-AdoMet</note>
    </ligand>
</feature>
<feature type="binding site" evidence="1">
    <location>
        <position position="162"/>
    </location>
    <ligand>
        <name>[4Fe-4S] cluster</name>
        <dbReference type="ChEBI" id="CHEBI:49883"/>
        <label>2</label>
        <note>4Fe-4S-S-AdoMet</note>
    </ligand>
</feature>